<sequence>MSQPITRENFDEWMIPVYAPAPFIPVRGEGSRLWDQQGKEYIDFAGGIAVNALGHAHPELREALNEQASKFWHTGNGYTNEPVLRLAKKLIDATFADRVFFCNSGAEANEAALKLARKFAHDRYGSHKSGIVAFKNAFHGRTLFTVSAGGQPAYSQDFAPLPPDIRHAAYNDINSASALIDDATCAVIVEPIQGEGGVVPASNAFLQGLRELCDRHNALLIFDEVQTGVGRTGELYACMHYGVTPDLLTTAKALGGGFPVGALLATEECASVMTVGTHGTTYGGNPLASAVAGKVLDLINTPEMLNGVKQRHDWFVERLNSINHHYSLFSEVRGLGLLIGCVLNADYAGQAKQISQEAVKAGVMVLIAGGNVVRFAPALNVSEEEVTTGLDRFAAACEHFVSRGSS</sequence>
<accession>Q8FGZ9</accession>
<keyword id="KW-0032">Aminotransferase</keyword>
<keyword id="KW-0056">Arginine metabolism</keyword>
<keyword id="KW-0663">Pyridoxal phosphate</keyword>
<keyword id="KW-1185">Reference proteome</keyword>
<keyword id="KW-0808">Transferase</keyword>
<evidence type="ECO:0000255" key="1">
    <source>
        <dbReference type="HAMAP-Rule" id="MF_01173"/>
    </source>
</evidence>
<gene>
    <name evidence="1" type="primary">astC</name>
    <name evidence="1" type="synonym">argM</name>
    <name type="ordered locus">c2148</name>
</gene>
<dbReference type="EC" id="2.6.1.81" evidence="1"/>
<dbReference type="EMBL" id="AE014075">
    <property type="protein sequence ID" value="AAN80607.1"/>
    <property type="molecule type" value="Genomic_DNA"/>
</dbReference>
<dbReference type="RefSeq" id="WP_000081990.1">
    <property type="nucleotide sequence ID" value="NZ_CP051263.1"/>
</dbReference>
<dbReference type="SMR" id="Q8FGZ9"/>
<dbReference type="STRING" id="199310.c2148"/>
<dbReference type="KEGG" id="ecc:c2148"/>
<dbReference type="eggNOG" id="COG4992">
    <property type="taxonomic scope" value="Bacteria"/>
</dbReference>
<dbReference type="HOGENOM" id="CLU_016922_10_1_6"/>
<dbReference type="BioCyc" id="ECOL199310:C2148-MONOMER"/>
<dbReference type="UniPathway" id="UPA00185">
    <property type="reaction ID" value="UER00281"/>
</dbReference>
<dbReference type="Proteomes" id="UP000001410">
    <property type="component" value="Chromosome"/>
</dbReference>
<dbReference type="GO" id="GO:0042802">
    <property type="term" value="F:identical protein binding"/>
    <property type="evidence" value="ECO:0007669"/>
    <property type="project" value="TreeGrafter"/>
</dbReference>
<dbReference type="GO" id="GO:0030170">
    <property type="term" value="F:pyridoxal phosphate binding"/>
    <property type="evidence" value="ECO:0007669"/>
    <property type="project" value="UniProtKB-UniRule"/>
</dbReference>
<dbReference type="GO" id="GO:0043825">
    <property type="term" value="F:succinylornithine transaminase activity"/>
    <property type="evidence" value="ECO:0007669"/>
    <property type="project" value="UniProtKB-EC"/>
</dbReference>
<dbReference type="GO" id="GO:1901607">
    <property type="term" value="P:alpha-amino acid biosynthetic process"/>
    <property type="evidence" value="ECO:0007669"/>
    <property type="project" value="UniProtKB-ARBA"/>
</dbReference>
<dbReference type="GO" id="GO:0019544">
    <property type="term" value="P:arginine catabolic process to glutamate"/>
    <property type="evidence" value="ECO:0007669"/>
    <property type="project" value="UniProtKB-UniRule"/>
</dbReference>
<dbReference type="GO" id="GO:0019545">
    <property type="term" value="P:arginine catabolic process to succinate"/>
    <property type="evidence" value="ECO:0007669"/>
    <property type="project" value="UniProtKB-UniRule"/>
</dbReference>
<dbReference type="GO" id="GO:0006593">
    <property type="term" value="P:ornithine catabolic process"/>
    <property type="evidence" value="ECO:0007669"/>
    <property type="project" value="InterPro"/>
</dbReference>
<dbReference type="CDD" id="cd00610">
    <property type="entry name" value="OAT_like"/>
    <property type="match status" value="1"/>
</dbReference>
<dbReference type="FunFam" id="3.40.640.10:FF:000004">
    <property type="entry name" value="Acetylornithine aminotransferase"/>
    <property type="match status" value="1"/>
</dbReference>
<dbReference type="FunFam" id="3.90.1150.10:FF:000009">
    <property type="entry name" value="Succinylornithine transaminase"/>
    <property type="match status" value="1"/>
</dbReference>
<dbReference type="Gene3D" id="3.90.1150.10">
    <property type="entry name" value="Aspartate Aminotransferase, domain 1"/>
    <property type="match status" value="1"/>
</dbReference>
<dbReference type="Gene3D" id="3.40.640.10">
    <property type="entry name" value="Type I PLP-dependent aspartate aminotransferase-like (Major domain)"/>
    <property type="match status" value="1"/>
</dbReference>
<dbReference type="HAMAP" id="MF_01107">
    <property type="entry name" value="ArgD_aminotrans_3"/>
    <property type="match status" value="1"/>
</dbReference>
<dbReference type="HAMAP" id="MF_01173">
    <property type="entry name" value="AstC_aminotrans_3"/>
    <property type="match status" value="1"/>
</dbReference>
<dbReference type="InterPro" id="IPR017652">
    <property type="entry name" value="Ac/SucOrn_transaminase_bac"/>
</dbReference>
<dbReference type="InterPro" id="IPR004636">
    <property type="entry name" value="AcOrn/SuccOrn_fam"/>
</dbReference>
<dbReference type="InterPro" id="IPR005814">
    <property type="entry name" value="Aminotrans_3"/>
</dbReference>
<dbReference type="InterPro" id="IPR049704">
    <property type="entry name" value="Aminotrans_3_PPA_site"/>
</dbReference>
<dbReference type="InterPro" id="IPR050103">
    <property type="entry name" value="Class-III_PLP-dep_AT"/>
</dbReference>
<dbReference type="InterPro" id="IPR015424">
    <property type="entry name" value="PyrdxlP-dep_Trfase"/>
</dbReference>
<dbReference type="InterPro" id="IPR015421">
    <property type="entry name" value="PyrdxlP-dep_Trfase_major"/>
</dbReference>
<dbReference type="InterPro" id="IPR015422">
    <property type="entry name" value="PyrdxlP-dep_Trfase_small"/>
</dbReference>
<dbReference type="InterPro" id="IPR026330">
    <property type="entry name" value="SOAT"/>
</dbReference>
<dbReference type="NCBIfam" id="TIGR03246">
    <property type="entry name" value="arg_catab_astC"/>
    <property type="match status" value="1"/>
</dbReference>
<dbReference type="NCBIfam" id="TIGR00707">
    <property type="entry name" value="argD"/>
    <property type="match status" value="1"/>
</dbReference>
<dbReference type="NCBIfam" id="NF002325">
    <property type="entry name" value="PRK01278.1"/>
    <property type="match status" value="1"/>
</dbReference>
<dbReference type="NCBIfam" id="NF003468">
    <property type="entry name" value="PRK05093.1"/>
    <property type="match status" value="1"/>
</dbReference>
<dbReference type="NCBIfam" id="NF009047">
    <property type="entry name" value="PRK12381.1"/>
    <property type="match status" value="1"/>
</dbReference>
<dbReference type="PANTHER" id="PTHR11986">
    <property type="entry name" value="AMINOTRANSFERASE CLASS III"/>
    <property type="match status" value="1"/>
</dbReference>
<dbReference type="PANTHER" id="PTHR11986:SF113">
    <property type="entry name" value="SUCCINYLORNITHINE TRANSAMINASE"/>
    <property type="match status" value="1"/>
</dbReference>
<dbReference type="Pfam" id="PF00202">
    <property type="entry name" value="Aminotran_3"/>
    <property type="match status" value="1"/>
</dbReference>
<dbReference type="PIRSF" id="PIRSF000521">
    <property type="entry name" value="Transaminase_4ab_Lys_Orn"/>
    <property type="match status" value="1"/>
</dbReference>
<dbReference type="SUPFAM" id="SSF53383">
    <property type="entry name" value="PLP-dependent transferases"/>
    <property type="match status" value="1"/>
</dbReference>
<dbReference type="PROSITE" id="PS00600">
    <property type="entry name" value="AA_TRANSFER_CLASS_3"/>
    <property type="match status" value="1"/>
</dbReference>
<reference key="1">
    <citation type="journal article" date="2002" name="Proc. Natl. Acad. Sci. U.S.A.">
        <title>Extensive mosaic structure revealed by the complete genome sequence of uropathogenic Escherichia coli.</title>
        <authorList>
            <person name="Welch R.A."/>
            <person name="Burland V."/>
            <person name="Plunkett G. III"/>
            <person name="Redford P."/>
            <person name="Roesch P."/>
            <person name="Rasko D."/>
            <person name="Buckles E.L."/>
            <person name="Liou S.-R."/>
            <person name="Boutin A."/>
            <person name="Hackett J."/>
            <person name="Stroud D."/>
            <person name="Mayhew G.F."/>
            <person name="Rose D.J."/>
            <person name="Zhou S."/>
            <person name="Schwartz D.C."/>
            <person name="Perna N.T."/>
            <person name="Mobley H.L.T."/>
            <person name="Donnenberg M.S."/>
            <person name="Blattner F.R."/>
        </authorList>
    </citation>
    <scope>NUCLEOTIDE SEQUENCE [LARGE SCALE GENOMIC DNA]</scope>
    <source>
        <strain>CFT073 / ATCC 700928 / UPEC</strain>
    </source>
</reference>
<proteinExistence type="inferred from homology"/>
<comment type="function">
    <text evidence="1">Catalyzes the transamination of N(2)-succinylornithine and alpha-ketoglutarate into N(2)-succinylglutamate semialdehyde and glutamate. Can also act as an acetylornithine aminotransferase.</text>
</comment>
<comment type="catalytic activity">
    <reaction evidence="1">
        <text>N(2)-succinyl-L-ornithine + 2-oxoglutarate = N-succinyl-L-glutamate 5-semialdehyde + L-glutamate</text>
        <dbReference type="Rhea" id="RHEA:16953"/>
        <dbReference type="ChEBI" id="CHEBI:16810"/>
        <dbReference type="ChEBI" id="CHEBI:29985"/>
        <dbReference type="ChEBI" id="CHEBI:58514"/>
        <dbReference type="ChEBI" id="CHEBI:58520"/>
        <dbReference type="EC" id="2.6.1.81"/>
    </reaction>
</comment>
<comment type="cofactor">
    <cofactor evidence="1">
        <name>pyridoxal 5'-phosphate</name>
        <dbReference type="ChEBI" id="CHEBI:597326"/>
    </cofactor>
</comment>
<comment type="pathway">
    <text evidence="1">Amino-acid degradation; L-arginine degradation via AST pathway; L-glutamate and succinate from L-arginine: step 3/5.</text>
</comment>
<comment type="similarity">
    <text evidence="1">Belongs to the class-III pyridoxal-phosphate-dependent aminotransferase family. AstC subfamily.</text>
</comment>
<protein>
    <recommendedName>
        <fullName evidence="1">Succinylornithine transaminase</fullName>
        <shortName>SOAT</shortName>
        <ecNumber evidence="1">2.6.1.81</ecNumber>
    </recommendedName>
    <alternativeName>
        <fullName evidence="1">Succinylornithine aminotransferase</fullName>
    </alternativeName>
</protein>
<feature type="chain" id="PRO_0000120353" description="Succinylornithine transaminase">
    <location>
        <begin position="1"/>
        <end position="406"/>
    </location>
</feature>
<feature type="modified residue" description="N6-(pyridoxal phosphate)lysine" evidence="1">
    <location>
        <position position="252"/>
    </location>
</feature>
<name>ASTC_ECOL6</name>
<organism>
    <name type="scientific">Escherichia coli O6:H1 (strain CFT073 / ATCC 700928 / UPEC)</name>
    <dbReference type="NCBI Taxonomy" id="199310"/>
    <lineage>
        <taxon>Bacteria</taxon>
        <taxon>Pseudomonadati</taxon>
        <taxon>Pseudomonadota</taxon>
        <taxon>Gammaproteobacteria</taxon>
        <taxon>Enterobacterales</taxon>
        <taxon>Enterobacteriaceae</taxon>
        <taxon>Escherichia</taxon>
    </lineage>
</organism>